<protein>
    <recommendedName>
        <fullName evidence="4">Conotoxin Cal16.1</fullName>
    </recommendedName>
    <alternativeName>
        <fullName evidence="4">Conotoxin Cal16a</fullName>
    </alternativeName>
</protein>
<name>CUGA_CONCL</name>
<accession>D2Y3T1</accession>
<accession>D2Y3T2</accession>
<feature type="signal peptide" evidence="2">
    <location>
        <begin position="1"/>
        <end position="19"/>
    </location>
</feature>
<feature type="propeptide" id="PRO_5000566295" evidence="6">
    <location>
        <begin position="20"/>
        <end position="48"/>
    </location>
</feature>
<feature type="peptide" id="PRO_5000570801" description="Conotoxin Cal16.1" evidence="6">
    <location>
        <begin position="49"/>
        <end position="63"/>
    </location>
</feature>
<feature type="modified residue" description="Pyrrolidone carboxylic acid" evidence="3">
    <location>
        <position position="49"/>
    </location>
</feature>
<feature type="modified residue" description="Glutamic acid 1-amide" evidence="3">
    <location>
        <position position="63"/>
    </location>
</feature>
<feature type="disulfide bond" evidence="1">
    <location>
        <begin position="51"/>
        <end position="60"/>
    </location>
</feature>
<feature type="disulfide bond" evidence="1">
    <location>
        <begin position="53"/>
        <end position="61"/>
    </location>
</feature>
<feature type="sequence conflict" description="In Ref. 1; ADB65789." evidence="5" ref="1">
    <original>FA</original>
    <variation>SV</variation>
    <location>
        <begin position="16"/>
        <end position="17"/>
    </location>
</feature>
<reference key="1">
    <citation type="journal article" date="2011" name="Toxicon">
        <title>Diversity of conotoxin types from Conus californicus reflects a diversity of prey types and a novel evolutionary history.</title>
        <authorList>
            <person name="Elliger C.A."/>
            <person name="Richmond T.A."/>
            <person name="Lebaric Z.N."/>
            <person name="Pierce N.T."/>
            <person name="Sweedler J.V."/>
            <person name="Gilly W.F."/>
        </authorList>
    </citation>
    <scope>NUCLEOTIDE SEQUENCE [MRNA]</scope>
    <scope>PYROGLUTAMATE FORMATION AT GLN-49</scope>
    <scope>AMIDATION AT GLU-63</scope>
    <scope>IDENTIFICATION BY MASS SPECTROMETRY</scope>
    <scope>SUBCELLULAR LOCATION</scope>
    <source>
        <tissue>Venom</tissue>
        <tissue>Venom duct</tissue>
    </source>
</reference>
<sequence length="65" mass="7253">MRCLSIFVLLVLLVSFAVAELDVEGEIVKQLLTRGTLKDADFWKRLEMQGCVCNANAKFCCGEGR</sequence>
<keyword id="KW-0027">Amidation</keyword>
<keyword id="KW-1015">Disulfide bond</keyword>
<keyword id="KW-0872">Ion channel impairing toxin</keyword>
<keyword id="KW-0528">Neurotoxin</keyword>
<keyword id="KW-0873">Pyrrolidone carboxylic acid</keyword>
<keyword id="KW-0964">Secreted</keyword>
<keyword id="KW-0732">Signal</keyword>
<keyword id="KW-0800">Toxin</keyword>
<proteinExistence type="evidence at protein level"/>
<evidence type="ECO:0000250" key="1">
    <source>
        <dbReference type="UniProtKB" id="P86942"/>
    </source>
</evidence>
<evidence type="ECO:0000255" key="2"/>
<evidence type="ECO:0000269" key="3">
    <source>
    </source>
</evidence>
<evidence type="ECO:0000303" key="4">
    <source>
    </source>
</evidence>
<evidence type="ECO:0000305" key="5"/>
<evidence type="ECO:0000305" key="6">
    <source>
    </source>
</evidence>
<dbReference type="EMBL" id="GU299513">
    <property type="protein sequence ID" value="ADB65788.1"/>
    <property type="molecule type" value="mRNA"/>
</dbReference>
<dbReference type="EMBL" id="GU299514">
    <property type="protein sequence ID" value="ADB65789.1"/>
    <property type="molecule type" value="mRNA"/>
</dbReference>
<dbReference type="ConoServer" id="3987">
    <property type="toxin name" value="Cal16.1 precursor"/>
</dbReference>
<dbReference type="GO" id="GO:0005576">
    <property type="term" value="C:extracellular region"/>
    <property type="evidence" value="ECO:0007669"/>
    <property type="project" value="UniProtKB-SubCell"/>
</dbReference>
<dbReference type="GO" id="GO:0099106">
    <property type="term" value="F:ion channel regulator activity"/>
    <property type="evidence" value="ECO:0007669"/>
    <property type="project" value="UniProtKB-KW"/>
</dbReference>
<dbReference type="GO" id="GO:0090729">
    <property type="term" value="F:toxin activity"/>
    <property type="evidence" value="ECO:0007669"/>
    <property type="project" value="UniProtKB-KW"/>
</dbReference>
<comment type="function">
    <text evidence="5">Probable neurotoxin with unknown target. Possibly targets ion channels.</text>
</comment>
<comment type="subcellular location">
    <subcellularLocation>
        <location evidence="3">Secreted</location>
    </subcellularLocation>
</comment>
<comment type="tissue specificity">
    <text evidence="6">Expressed by the venom duct.</text>
</comment>
<comment type="domain">
    <text evidence="5">The cysteine framework is XVI (C-C-CC).</text>
</comment>
<organism>
    <name type="scientific">Californiconus californicus</name>
    <name type="common">California cone</name>
    <name type="synonym">Conus californicus</name>
    <dbReference type="NCBI Taxonomy" id="1736779"/>
    <lineage>
        <taxon>Eukaryota</taxon>
        <taxon>Metazoa</taxon>
        <taxon>Spiralia</taxon>
        <taxon>Lophotrochozoa</taxon>
        <taxon>Mollusca</taxon>
        <taxon>Gastropoda</taxon>
        <taxon>Caenogastropoda</taxon>
        <taxon>Neogastropoda</taxon>
        <taxon>Conoidea</taxon>
        <taxon>Conidae</taxon>
        <taxon>Californiconus</taxon>
    </lineage>
</organism>